<name>TSAC_XYLFM</name>
<dbReference type="EC" id="2.7.7.87" evidence="1"/>
<dbReference type="EMBL" id="CP000941">
    <property type="protein sequence ID" value="ACA12809.1"/>
    <property type="status" value="ALT_INIT"/>
    <property type="molecule type" value="Genomic_DNA"/>
</dbReference>
<dbReference type="RefSeq" id="WP_021358455.1">
    <property type="nucleotide sequence ID" value="NC_010513.1"/>
</dbReference>
<dbReference type="SMR" id="B0U4N0"/>
<dbReference type="KEGG" id="xfm:Xfasm12_1935"/>
<dbReference type="HOGENOM" id="CLU_031397_6_0_6"/>
<dbReference type="GO" id="GO:0005737">
    <property type="term" value="C:cytoplasm"/>
    <property type="evidence" value="ECO:0007669"/>
    <property type="project" value="UniProtKB-SubCell"/>
</dbReference>
<dbReference type="GO" id="GO:0005524">
    <property type="term" value="F:ATP binding"/>
    <property type="evidence" value="ECO:0007669"/>
    <property type="project" value="UniProtKB-UniRule"/>
</dbReference>
<dbReference type="GO" id="GO:0003725">
    <property type="term" value="F:double-stranded RNA binding"/>
    <property type="evidence" value="ECO:0007669"/>
    <property type="project" value="InterPro"/>
</dbReference>
<dbReference type="GO" id="GO:0061710">
    <property type="term" value="F:L-threonylcarbamoyladenylate synthase"/>
    <property type="evidence" value="ECO:0007669"/>
    <property type="project" value="UniProtKB-EC"/>
</dbReference>
<dbReference type="GO" id="GO:0000049">
    <property type="term" value="F:tRNA binding"/>
    <property type="evidence" value="ECO:0007669"/>
    <property type="project" value="TreeGrafter"/>
</dbReference>
<dbReference type="GO" id="GO:0006450">
    <property type="term" value="P:regulation of translational fidelity"/>
    <property type="evidence" value="ECO:0007669"/>
    <property type="project" value="TreeGrafter"/>
</dbReference>
<dbReference type="GO" id="GO:0002949">
    <property type="term" value="P:tRNA threonylcarbamoyladenosine modification"/>
    <property type="evidence" value="ECO:0007669"/>
    <property type="project" value="UniProtKB-UniRule"/>
</dbReference>
<dbReference type="FunFam" id="3.90.870.10:FF:000004">
    <property type="entry name" value="Threonylcarbamoyl-AMP synthase"/>
    <property type="match status" value="1"/>
</dbReference>
<dbReference type="Gene3D" id="3.90.870.10">
    <property type="entry name" value="DHBP synthase"/>
    <property type="match status" value="1"/>
</dbReference>
<dbReference type="HAMAP" id="MF_01852">
    <property type="entry name" value="TsaC"/>
    <property type="match status" value="1"/>
</dbReference>
<dbReference type="InterPro" id="IPR017945">
    <property type="entry name" value="DHBP_synth_RibB-like_a/b_dom"/>
</dbReference>
<dbReference type="InterPro" id="IPR006070">
    <property type="entry name" value="Sua5-like_dom"/>
</dbReference>
<dbReference type="InterPro" id="IPR023535">
    <property type="entry name" value="TC-AMP_synthase"/>
</dbReference>
<dbReference type="InterPro" id="IPR050156">
    <property type="entry name" value="TC-AMP_synthase_SUA5"/>
</dbReference>
<dbReference type="PANTHER" id="PTHR17490">
    <property type="entry name" value="SUA5"/>
    <property type="match status" value="1"/>
</dbReference>
<dbReference type="PANTHER" id="PTHR17490:SF18">
    <property type="entry name" value="THREONYLCARBAMOYL-AMP SYNTHASE"/>
    <property type="match status" value="1"/>
</dbReference>
<dbReference type="Pfam" id="PF01300">
    <property type="entry name" value="Sua5_yciO_yrdC"/>
    <property type="match status" value="1"/>
</dbReference>
<dbReference type="SUPFAM" id="SSF55821">
    <property type="entry name" value="YrdC/RibB"/>
    <property type="match status" value="1"/>
</dbReference>
<dbReference type="PROSITE" id="PS51163">
    <property type="entry name" value="YRDC"/>
    <property type="match status" value="1"/>
</dbReference>
<comment type="function">
    <text evidence="1">Required for the formation of a threonylcarbamoyl group on adenosine at position 37 (t(6)A37) in tRNAs that read codons beginning with adenine. Catalyzes the conversion of L-threonine, HCO(3)(-)/CO(2) and ATP to give threonylcarbamoyl-AMP (TC-AMP) as the acyladenylate intermediate, with the release of diphosphate.</text>
</comment>
<comment type="catalytic activity">
    <reaction evidence="1">
        <text>L-threonine + hydrogencarbonate + ATP = L-threonylcarbamoyladenylate + diphosphate + H2O</text>
        <dbReference type="Rhea" id="RHEA:36407"/>
        <dbReference type="ChEBI" id="CHEBI:15377"/>
        <dbReference type="ChEBI" id="CHEBI:17544"/>
        <dbReference type="ChEBI" id="CHEBI:30616"/>
        <dbReference type="ChEBI" id="CHEBI:33019"/>
        <dbReference type="ChEBI" id="CHEBI:57926"/>
        <dbReference type="ChEBI" id="CHEBI:73682"/>
        <dbReference type="EC" id="2.7.7.87"/>
    </reaction>
</comment>
<comment type="subcellular location">
    <subcellularLocation>
        <location evidence="1">Cytoplasm</location>
    </subcellularLocation>
</comment>
<comment type="similarity">
    <text evidence="1">Belongs to the SUA5 family. TsaC subfamily.</text>
</comment>
<comment type="sequence caution" evidence="2">
    <conflict type="erroneous initiation">
        <sequence resource="EMBL-CDS" id="ACA12809"/>
    </conflict>
</comment>
<proteinExistence type="inferred from homology"/>
<gene>
    <name evidence="1" type="primary">tsaC</name>
    <name type="synonym">rimN</name>
    <name type="ordered locus">Xfasm12_1935</name>
</gene>
<evidence type="ECO:0000255" key="1">
    <source>
        <dbReference type="HAMAP-Rule" id="MF_01852"/>
    </source>
</evidence>
<evidence type="ECO:0000305" key="2"/>
<protein>
    <recommendedName>
        <fullName evidence="1">Threonylcarbamoyl-AMP synthase</fullName>
        <shortName evidence="1">TC-AMP synthase</shortName>
        <ecNumber evidence="1">2.7.7.87</ecNumber>
    </recommendedName>
    <alternativeName>
        <fullName evidence="1">L-threonylcarbamoyladenylate synthase</fullName>
    </alternativeName>
    <alternativeName>
        <fullName evidence="1">t(6)A37 threonylcarbamoyladenosine biosynthesis protein TsaC</fullName>
    </alternativeName>
    <alternativeName>
        <fullName evidence="1">tRNA threonylcarbamoyladenosine biosynthesis protein TsaC</fullName>
    </alternativeName>
</protein>
<reference key="1">
    <citation type="journal article" date="2010" name="J. Bacteriol.">
        <title>Whole genome sequences of two Xylella fastidiosa strains (M12 and M23) causing almond leaf scorch disease in California.</title>
        <authorList>
            <person name="Chen J."/>
            <person name="Xie G."/>
            <person name="Han S."/>
            <person name="Chertkov O."/>
            <person name="Sims D."/>
            <person name="Civerolo E.L."/>
        </authorList>
    </citation>
    <scope>NUCLEOTIDE SEQUENCE [LARGE SCALE GENOMIC DNA]</scope>
    <source>
        <strain>M12</strain>
    </source>
</reference>
<accession>B0U4N0</accession>
<sequence length="187" mass="20035">MATTLTLSEAVTALQQGGVIAYPTEAVWGLGCDPRQETAVHTLLNIKQRASGKGLILVTAELNTLQDWLDLDTLSPERLHEVQASWPGPHTWVLPASTRAPHWITGHHNGLAVRISAHPLVSALCRAWNMALISTSANVAGQSPARRREDLDPSLLPHLAGIVDGPTGGLAQPTSIRDARSGHILRL</sequence>
<organism>
    <name type="scientific">Xylella fastidiosa (strain M12)</name>
    <dbReference type="NCBI Taxonomy" id="405440"/>
    <lineage>
        <taxon>Bacteria</taxon>
        <taxon>Pseudomonadati</taxon>
        <taxon>Pseudomonadota</taxon>
        <taxon>Gammaproteobacteria</taxon>
        <taxon>Lysobacterales</taxon>
        <taxon>Lysobacteraceae</taxon>
        <taxon>Xylella</taxon>
    </lineage>
</organism>
<feature type="chain" id="PRO_0000353018" description="Threonylcarbamoyl-AMP synthase">
    <location>
        <begin position="1"/>
        <end position="187"/>
    </location>
</feature>
<feature type="domain" description="YrdC-like" evidence="1">
    <location>
        <begin position="4"/>
        <end position="187"/>
    </location>
</feature>
<keyword id="KW-0067">ATP-binding</keyword>
<keyword id="KW-0963">Cytoplasm</keyword>
<keyword id="KW-0547">Nucleotide-binding</keyword>
<keyword id="KW-0548">Nucleotidyltransferase</keyword>
<keyword id="KW-0808">Transferase</keyword>
<keyword id="KW-0819">tRNA processing</keyword>